<protein>
    <recommendedName>
        <fullName evidence="1">Large ribosomal subunit protein uL30</fullName>
    </recommendedName>
    <alternativeName>
        <fullName evidence="2">50S ribosomal protein L30</fullName>
    </alternativeName>
</protein>
<name>RL30_BLOFL</name>
<comment type="subunit">
    <text evidence="1">Part of the 50S ribosomal subunit.</text>
</comment>
<comment type="similarity">
    <text evidence="1">Belongs to the universal ribosomal protein uL30 family.</text>
</comment>
<accession>Q7VQD0</accession>
<feature type="chain" id="PRO_0000273749" description="Large ribosomal subunit protein uL30">
    <location>
        <begin position="1"/>
        <end position="58"/>
    </location>
</feature>
<dbReference type="EMBL" id="BX248583">
    <property type="protein sequence ID" value="CAD83724.1"/>
    <property type="molecule type" value="Genomic_DNA"/>
</dbReference>
<dbReference type="SMR" id="Q7VQD0"/>
<dbReference type="STRING" id="203907.Bfl209"/>
<dbReference type="KEGG" id="bfl:Bfl209"/>
<dbReference type="eggNOG" id="COG1841">
    <property type="taxonomic scope" value="Bacteria"/>
</dbReference>
<dbReference type="HOGENOM" id="CLU_131047_1_4_6"/>
<dbReference type="OrthoDB" id="9812790at2"/>
<dbReference type="Proteomes" id="UP000002192">
    <property type="component" value="Chromosome"/>
</dbReference>
<dbReference type="GO" id="GO:0022625">
    <property type="term" value="C:cytosolic large ribosomal subunit"/>
    <property type="evidence" value="ECO:0007669"/>
    <property type="project" value="TreeGrafter"/>
</dbReference>
<dbReference type="GO" id="GO:0003735">
    <property type="term" value="F:structural constituent of ribosome"/>
    <property type="evidence" value="ECO:0007669"/>
    <property type="project" value="InterPro"/>
</dbReference>
<dbReference type="GO" id="GO:0006412">
    <property type="term" value="P:translation"/>
    <property type="evidence" value="ECO:0007669"/>
    <property type="project" value="UniProtKB-UniRule"/>
</dbReference>
<dbReference type="CDD" id="cd01658">
    <property type="entry name" value="Ribosomal_L30"/>
    <property type="match status" value="1"/>
</dbReference>
<dbReference type="FunFam" id="3.30.1390.20:FF:000001">
    <property type="entry name" value="50S ribosomal protein L30"/>
    <property type="match status" value="1"/>
</dbReference>
<dbReference type="Gene3D" id="3.30.1390.20">
    <property type="entry name" value="Ribosomal protein L30, ferredoxin-like fold domain"/>
    <property type="match status" value="1"/>
</dbReference>
<dbReference type="HAMAP" id="MF_01371_B">
    <property type="entry name" value="Ribosomal_uL30_B"/>
    <property type="match status" value="1"/>
</dbReference>
<dbReference type="InterPro" id="IPR036919">
    <property type="entry name" value="Ribo_uL30_ferredoxin-like_sf"/>
</dbReference>
<dbReference type="InterPro" id="IPR005996">
    <property type="entry name" value="Ribosomal_uL30_bac-type"/>
</dbReference>
<dbReference type="InterPro" id="IPR018038">
    <property type="entry name" value="Ribosomal_uL30_CS"/>
</dbReference>
<dbReference type="InterPro" id="IPR016082">
    <property type="entry name" value="Ribosomal_uL30_ferredoxin-like"/>
</dbReference>
<dbReference type="NCBIfam" id="TIGR01308">
    <property type="entry name" value="rpmD_bact"/>
    <property type="match status" value="1"/>
</dbReference>
<dbReference type="PANTHER" id="PTHR15892:SF2">
    <property type="entry name" value="LARGE RIBOSOMAL SUBUNIT PROTEIN UL30M"/>
    <property type="match status" value="1"/>
</dbReference>
<dbReference type="PANTHER" id="PTHR15892">
    <property type="entry name" value="MITOCHONDRIAL RIBOSOMAL PROTEIN L30"/>
    <property type="match status" value="1"/>
</dbReference>
<dbReference type="Pfam" id="PF00327">
    <property type="entry name" value="Ribosomal_L30"/>
    <property type="match status" value="1"/>
</dbReference>
<dbReference type="PIRSF" id="PIRSF002211">
    <property type="entry name" value="Ribosomal_L30_bac-type"/>
    <property type="match status" value="1"/>
</dbReference>
<dbReference type="SUPFAM" id="SSF55129">
    <property type="entry name" value="Ribosomal protein L30p/L7e"/>
    <property type="match status" value="1"/>
</dbReference>
<dbReference type="PROSITE" id="PS00634">
    <property type="entry name" value="RIBOSOMAL_L30"/>
    <property type="match status" value="1"/>
</dbReference>
<reference key="1">
    <citation type="journal article" date="2003" name="Proc. Natl. Acad. Sci. U.S.A.">
        <title>The genome sequence of Blochmannia floridanus: comparative analysis of reduced genomes.</title>
        <authorList>
            <person name="Gil R."/>
            <person name="Silva F.J."/>
            <person name="Zientz E."/>
            <person name="Delmotte F."/>
            <person name="Gonzalez-Candelas F."/>
            <person name="Latorre A."/>
            <person name="Rausell C."/>
            <person name="Kamerbeek J."/>
            <person name="Gadau J."/>
            <person name="Hoelldobler B."/>
            <person name="van Ham R.C.H.J."/>
            <person name="Gross R."/>
            <person name="Moya A."/>
        </authorList>
    </citation>
    <scope>NUCLEOTIDE SEQUENCE [LARGE SCALE GENOMIC DNA]</scope>
</reference>
<proteinExistence type="inferred from homology"/>
<sequence>MLKITQIRSSIGCIPKHKATLRGLGLRRIGNTVSKIDTPSVRGMINLVLYMIQVKRQD</sequence>
<keyword id="KW-1185">Reference proteome</keyword>
<keyword id="KW-0687">Ribonucleoprotein</keyword>
<keyword id="KW-0689">Ribosomal protein</keyword>
<evidence type="ECO:0000255" key="1">
    <source>
        <dbReference type="HAMAP-Rule" id="MF_01371"/>
    </source>
</evidence>
<evidence type="ECO:0000305" key="2"/>
<organism>
    <name type="scientific">Blochmanniella floridana</name>
    <dbReference type="NCBI Taxonomy" id="203907"/>
    <lineage>
        <taxon>Bacteria</taxon>
        <taxon>Pseudomonadati</taxon>
        <taxon>Pseudomonadota</taxon>
        <taxon>Gammaproteobacteria</taxon>
        <taxon>Enterobacterales</taxon>
        <taxon>Enterobacteriaceae</taxon>
        <taxon>ant endosymbionts</taxon>
        <taxon>Candidatus Blochmanniella</taxon>
    </lineage>
</organism>
<gene>
    <name evidence="1" type="primary">rpmD</name>
    <name type="ordered locus">Bfl209</name>
</gene>